<accession>A7HV25</accession>
<gene>
    <name evidence="1" type="primary">purA</name>
    <name type="ordered locus">Plav_2144</name>
</gene>
<reference key="1">
    <citation type="journal article" date="2011" name="Stand. Genomic Sci.">
        <title>Complete genome sequence of Parvibaculum lavamentivorans type strain (DS-1(T)).</title>
        <authorList>
            <person name="Schleheck D."/>
            <person name="Weiss M."/>
            <person name="Pitluck S."/>
            <person name="Bruce D."/>
            <person name="Land M.L."/>
            <person name="Han S."/>
            <person name="Saunders E."/>
            <person name="Tapia R."/>
            <person name="Detter C."/>
            <person name="Brettin T."/>
            <person name="Han J."/>
            <person name="Woyke T."/>
            <person name="Goodwin L."/>
            <person name="Pennacchio L."/>
            <person name="Nolan M."/>
            <person name="Cook A.M."/>
            <person name="Kjelleberg S."/>
            <person name="Thomas T."/>
        </authorList>
    </citation>
    <scope>NUCLEOTIDE SEQUENCE [LARGE SCALE GENOMIC DNA]</scope>
    <source>
        <strain>DS-1 / DSM 13023 / NCIMB 13966</strain>
    </source>
</reference>
<evidence type="ECO:0000255" key="1">
    <source>
        <dbReference type="HAMAP-Rule" id="MF_00011"/>
    </source>
</evidence>
<comment type="function">
    <text evidence="1">Plays an important role in the de novo pathway of purine nucleotide biosynthesis. Catalyzes the first committed step in the biosynthesis of AMP from IMP.</text>
</comment>
<comment type="catalytic activity">
    <reaction evidence="1">
        <text>IMP + L-aspartate + GTP = N(6)-(1,2-dicarboxyethyl)-AMP + GDP + phosphate + 2 H(+)</text>
        <dbReference type="Rhea" id="RHEA:15753"/>
        <dbReference type="ChEBI" id="CHEBI:15378"/>
        <dbReference type="ChEBI" id="CHEBI:29991"/>
        <dbReference type="ChEBI" id="CHEBI:37565"/>
        <dbReference type="ChEBI" id="CHEBI:43474"/>
        <dbReference type="ChEBI" id="CHEBI:57567"/>
        <dbReference type="ChEBI" id="CHEBI:58053"/>
        <dbReference type="ChEBI" id="CHEBI:58189"/>
        <dbReference type="EC" id="6.3.4.4"/>
    </reaction>
</comment>
<comment type="cofactor">
    <cofactor evidence="1">
        <name>Mg(2+)</name>
        <dbReference type="ChEBI" id="CHEBI:18420"/>
    </cofactor>
    <text evidence="1">Binds 1 Mg(2+) ion per subunit.</text>
</comment>
<comment type="pathway">
    <text evidence="1">Purine metabolism; AMP biosynthesis via de novo pathway; AMP from IMP: step 1/2.</text>
</comment>
<comment type="subunit">
    <text evidence="1">Homodimer.</text>
</comment>
<comment type="subcellular location">
    <subcellularLocation>
        <location evidence="1">Cytoplasm</location>
    </subcellularLocation>
</comment>
<comment type="similarity">
    <text evidence="1">Belongs to the adenylosuccinate synthetase family.</text>
</comment>
<feature type="chain" id="PRO_1000070943" description="Adenylosuccinate synthetase">
    <location>
        <begin position="1"/>
        <end position="430"/>
    </location>
</feature>
<feature type="active site" description="Proton acceptor" evidence="1">
    <location>
        <position position="13"/>
    </location>
</feature>
<feature type="active site" description="Proton donor" evidence="1">
    <location>
        <position position="41"/>
    </location>
</feature>
<feature type="binding site" evidence="1">
    <location>
        <begin position="12"/>
        <end position="18"/>
    </location>
    <ligand>
        <name>GTP</name>
        <dbReference type="ChEBI" id="CHEBI:37565"/>
    </ligand>
</feature>
<feature type="binding site" description="in other chain" evidence="1">
    <location>
        <begin position="13"/>
        <end position="16"/>
    </location>
    <ligand>
        <name>IMP</name>
        <dbReference type="ChEBI" id="CHEBI:58053"/>
        <note>ligand shared between dimeric partners</note>
    </ligand>
</feature>
<feature type="binding site" evidence="1">
    <location>
        <position position="13"/>
    </location>
    <ligand>
        <name>Mg(2+)</name>
        <dbReference type="ChEBI" id="CHEBI:18420"/>
    </ligand>
</feature>
<feature type="binding site" description="in other chain" evidence="1">
    <location>
        <begin position="38"/>
        <end position="41"/>
    </location>
    <ligand>
        <name>IMP</name>
        <dbReference type="ChEBI" id="CHEBI:58053"/>
        <note>ligand shared between dimeric partners</note>
    </ligand>
</feature>
<feature type="binding site" evidence="1">
    <location>
        <begin position="40"/>
        <end position="42"/>
    </location>
    <ligand>
        <name>GTP</name>
        <dbReference type="ChEBI" id="CHEBI:37565"/>
    </ligand>
</feature>
<feature type="binding site" evidence="1">
    <location>
        <position position="40"/>
    </location>
    <ligand>
        <name>Mg(2+)</name>
        <dbReference type="ChEBI" id="CHEBI:18420"/>
    </ligand>
</feature>
<feature type="binding site" description="in other chain" evidence="1">
    <location>
        <position position="130"/>
    </location>
    <ligand>
        <name>IMP</name>
        <dbReference type="ChEBI" id="CHEBI:58053"/>
        <note>ligand shared between dimeric partners</note>
    </ligand>
</feature>
<feature type="binding site" evidence="1">
    <location>
        <position position="144"/>
    </location>
    <ligand>
        <name>IMP</name>
        <dbReference type="ChEBI" id="CHEBI:58053"/>
        <note>ligand shared between dimeric partners</note>
    </ligand>
</feature>
<feature type="binding site" description="in other chain" evidence="1">
    <location>
        <position position="224"/>
    </location>
    <ligand>
        <name>IMP</name>
        <dbReference type="ChEBI" id="CHEBI:58053"/>
        <note>ligand shared between dimeric partners</note>
    </ligand>
</feature>
<feature type="binding site" description="in other chain" evidence="1">
    <location>
        <position position="239"/>
    </location>
    <ligand>
        <name>IMP</name>
        <dbReference type="ChEBI" id="CHEBI:58053"/>
        <note>ligand shared between dimeric partners</note>
    </ligand>
</feature>
<feature type="binding site" evidence="1">
    <location>
        <begin position="299"/>
        <end position="305"/>
    </location>
    <ligand>
        <name>substrate</name>
    </ligand>
</feature>
<feature type="binding site" description="in other chain" evidence="1">
    <location>
        <position position="303"/>
    </location>
    <ligand>
        <name>IMP</name>
        <dbReference type="ChEBI" id="CHEBI:58053"/>
        <note>ligand shared between dimeric partners</note>
    </ligand>
</feature>
<feature type="binding site" evidence="1">
    <location>
        <position position="305"/>
    </location>
    <ligand>
        <name>GTP</name>
        <dbReference type="ChEBI" id="CHEBI:37565"/>
    </ligand>
</feature>
<feature type="binding site" evidence="1">
    <location>
        <begin position="331"/>
        <end position="333"/>
    </location>
    <ligand>
        <name>GTP</name>
        <dbReference type="ChEBI" id="CHEBI:37565"/>
    </ligand>
</feature>
<feature type="binding site" evidence="1">
    <location>
        <begin position="413"/>
        <end position="415"/>
    </location>
    <ligand>
        <name>GTP</name>
        <dbReference type="ChEBI" id="CHEBI:37565"/>
    </ligand>
</feature>
<keyword id="KW-0963">Cytoplasm</keyword>
<keyword id="KW-0342">GTP-binding</keyword>
<keyword id="KW-0436">Ligase</keyword>
<keyword id="KW-0460">Magnesium</keyword>
<keyword id="KW-0479">Metal-binding</keyword>
<keyword id="KW-0547">Nucleotide-binding</keyword>
<keyword id="KW-0658">Purine biosynthesis</keyword>
<keyword id="KW-1185">Reference proteome</keyword>
<dbReference type="EC" id="6.3.4.4" evidence="1"/>
<dbReference type="EMBL" id="CP000774">
    <property type="protein sequence ID" value="ABS63758.1"/>
    <property type="molecule type" value="Genomic_DNA"/>
</dbReference>
<dbReference type="RefSeq" id="WP_012111063.1">
    <property type="nucleotide sequence ID" value="NC_009719.1"/>
</dbReference>
<dbReference type="SMR" id="A7HV25"/>
<dbReference type="STRING" id="402881.Plav_2144"/>
<dbReference type="KEGG" id="pla:Plav_2144"/>
<dbReference type="eggNOG" id="COG0104">
    <property type="taxonomic scope" value="Bacteria"/>
</dbReference>
<dbReference type="HOGENOM" id="CLU_029848_0_0_5"/>
<dbReference type="OrthoDB" id="9807553at2"/>
<dbReference type="UniPathway" id="UPA00075">
    <property type="reaction ID" value="UER00335"/>
</dbReference>
<dbReference type="Proteomes" id="UP000006377">
    <property type="component" value="Chromosome"/>
</dbReference>
<dbReference type="GO" id="GO:0005737">
    <property type="term" value="C:cytoplasm"/>
    <property type="evidence" value="ECO:0007669"/>
    <property type="project" value="UniProtKB-SubCell"/>
</dbReference>
<dbReference type="GO" id="GO:0004019">
    <property type="term" value="F:adenylosuccinate synthase activity"/>
    <property type="evidence" value="ECO:0007669"/>
    <property type="project" value="UniProtKB-UniRule"/>
</dbReference>
<dbReference type="GO" id="GO:0005525">
    <property type="term" value="F:GTP binding"/>
    <property type="evidence" value="ECO:0007669"/>
    <property type="project" value="UniProtKB-UniRule"/>
</dbReference>
<dbReference type="GO" id="GO:0000287">
    <property type="term" value="F:magnesium ion binding"/>
    <property type="evidence" value="ECO:0007669"/>
    <property type="project" value="UniProtKB-UniRule"/>
</dbReference>
<dbReference type="GO" id="GO:0044208">
    <property type="term" value="P:'de novo' AMP biosynthetic process"/>
    <property type="evidence" value="ECO:0007669"/>
    <property type="project" value="UniProtKB-UniRule"/>
</dbReference>
<dbReference type="GO" id="GO:0046040">
    <property type="term" value="P:IMP metabolic process"/>
    <property type="evidence" value="ECO:0007669"/>
    <property type="project" value="TreeGrafter"/>
</dbReference>
<dbReference type="CDD" id="cd03108">
    <property type="entry name" value="AdSS"/>
    <property type="match status" value="1"/>
</dbReference>
<dbReference type="FunFam" id="1.10.300.10:FF:000001">
    <property type="entry name" value="Adenylosuccinate synthetase"/>
    <property type="match status" value="1"/>
</dbReference>
<dbReference type="FunFam" id="3.90.170.10:FF:000001">
    <property type="entry name" value="Adenylosuccinate synthetase"/>
    <property type="match status" value="1"/>
</dbReference>
<dbReference type="Gene3D" id="3.40.440.10">
    <property type="entry name" value="Adenylosuccinate Synthetase, subunit A, domain 1"/>
    <property type="match status" value="1"/>
</dbReference>
<dbReference type="Gene3D" id="1.10.300.10">
    <property type="entry name" value="Adenylosuccinate Synthetase, subunit A, domain 2"/>
    <property type="match status" value="1"/>
</dbReference>
<dbReference type="Gene3D" id="3.90.170.10">
    <property type="entry name" value="Adenylosuccinate Synthetase, subunit A, domain 3"/>
    <property type="match status" value="1"/>
</dbReference>
<dbReference type="HAMAP" id="MF_00011">
    <property type="entry name" value="Adenylosucc_synth"/>
    <property type="match status" value="1"/>
</dbReference>
<dbReference type="InterPro" id="IPR018220">
    <property type="entry name" value="Adenylosuccin_syn_GTP-bd"/>
</dbReference>
<dbReference type="InterPro" id="IPR033128">
    <property type="entry name" value="Adenylosuccin_syn_Lys_AS"/>
</dbReference>
<dbReference type="InterPro" id="IPR042109">
    <property type="entry name" value="Adenylosuccinate_synth_dom1"/>
</dbReference>
<dbReference type="InterPro" id="IPR042110">
    <property type="entry name" value="Adenylosuccinate_synth_dom2"/>
</dbReference>
<dbReference type="InterPro" id="IPR042111">
    <property type="entry name" value="Adenylosuccinate_synth_dom3"/>
</dbReference>
<dbReference type="InterPro" id="IPR001114">
    <property type="entry name" value="Adenylosuccinate_synthetase"/>
</dbReference>
<dbReference type="InterPro" id="IPR027417">
    <property type="entry name" value="P-loop_NTPase"/>
</dbReference>
<dbReference type="NCBIfam" id="NF002223">
    <property type="entry name" value="PRK01117.1"/>
    <property type="match status" value="1"/>
</dbReference>
<dbReference type="NCBIfam" id="TIGR00184">
    <property type="entry name" value="purA"/>
    <property type="match status" value="1"/>
</dbReference>
<dbReference type="PANTHER" id="PTHR11846">
    <property type="entry name" value="ADENYLOSUCCINATE SYNTHETASE"/>
    <property type="match status" value="1"/>
</dbReference>
<dbReference type="PANTHER" id="PTHR11846:SF0">
    <property type="entry name" value="ADENYLOSUCCINATE SYNTHETASE"/>
    <property type="match status" value="1"/>
</dbReference>
<dbReference type="Pfam" id="PF00709">
    <property type="entry name" value="Adenylsucc_synt"/>
    <property type="match status" value="1"/>
</dbReference>
<dbReference type="SMART" id="SM00788">
    <property type="entry name" value="Adenylsucc_synt"/>
    <property type="match status" value="1"/>
</dbReference>
<dbReference type="SUPFAM" id="SSF52540">
    <property type="entry name" value="P-loop containing nucleoside triphosphate hydrolases"/>
    <property type="match status" value="1"/>
</dbReference>
<dbReference type="PROSITE" id="PS01266">
    <property type="entry name" value="ADENYLOSUCCIN_SYN_1"/>
    <property type="match status" value="1"/>
</dbReference>
<dbReference type="PROSITE" id="PS00513">
    <property type="entry name" value="ADENYLOSUCCIN_SYN_2"/>
    <property type="match status" value="1"/>
</dbReference>
<proteinExistence type="inferred from homology"/>
<organism>
    <name type="scientific">Parvibaculum lavamentivorans (strain DS-1 / DSM 13023 / NCIMB 13966)</name>
    <dbReference type="NCBI Taxonomy" id="402881"/>
    <lineage>
        <taxon>Bacteria</taxon>
        <taxon>Pseudomonadati</taxon>
        <taxon>Pseudomonadota</taxon>
        <taxon>Alphaproteobacteria</taxon>
        <taxon>Hyphomicrobiales</taxon>
        <taxon>Parvibaculaceae</taxon>
        <taxon>Parvibaculum</taxon>
    </lineage>
</organism>
<name>PURA_PARL1</name>
<protein>
    <recommendedName>
        <fullName evidence="1">Adenylosuccinate synthetase</fullName>
        <shortName evidence="1">AMPSase</shortName>
        <shortName evidence="1">AdSS</shortName>
        <ecNumber evidence="1">6.3.4.4</ecNumber>
    </recommendedName>
    <alternativeName>
        <fullName evidence="1">IMP--aspartate ligase</fullName>
    </alternativeName>
</protein>
<sequence>MANVAVVGSQWGDEGKGKIVDWLSERADVVVRFQGGHNAGHTLVIDGVTYKLSLLPSGIVRKGKLSILGNGVVLDPWAFAKEVDEIASKGVAVTPDNLKIAENAVLILPVHRELDEMREGANSGVKIGTTKRGIGPAYEDKAGRRAIRVIDLADPSTLTIKVEGLLAHHNALRRGNRLEELEAGPIVEALKEIAPRVLPFVAPVWNVLDEAKRKGQRILFEGAQGTMLDVDHGTYPFVTSSNTVAGQAAGGSGVGPGAIGFVLGITKAYTTRVGEGPFPTELTDEVGQRLGERGHEFGTVTGRKRRCGWFDAVMVRQAIKTGGITGIALTKLDVLDGFDEIKVCTSYEIDGKLVDHLPAGMDAQAKVTPIYETLEGWKDSTQGARSWAQLPAAAVKYVRYVEELIEAPVALLSTSPERDDTILMKDPFED</sequence>